<keyword id="KW-0997">Cell inner membrane</keyword>
<keyword id="KW-1003">Cell membrane</keyword>
<keyword id="KW-0472">Membrane</keyword>
<keyword id="KW-0653">Protein transport</keyword>
<keyword id="KW-1185">Reference proteome</keyword>
<keyword id="KW-0811">Translocation</keyword>
<keyword id="KW-0812">Transmembrane</keyword>
<keyword id="KW-1133">Transmembrane helix</keyword>
<keyword id="KW-0813">Transport</keyword>
<protein>
    <recommendedName>
        <fullName evidence="1">Probable Sec-independent protein translocase protein TatE</fullName>
    </recommendedName>
</protein>
<evidence type="ECO:0000255" key="1">
    <source>
        <dbReference type="HAMAP-Rule" id="MF_00903"/>
    </source>
</evidence>
<accession>A9MKE5</accession>
<organism>
    <name type="scientific">Salmonella arizonae (strain ATCC BAA-731 / CDC346-86 / RSK2980)</name>
    <dbReference type="NCBI Taxonomy" id="41514"/>
    <lineage>
        <taxon>Bacteria</taxon>
        <taxon>Pseudomonadati</taxon>
        <taxon>Pseudomonadota</taxon>
        <taxon>Gammaproteobacteria</taxon>
        <taxon>Enterobacterales</taxon>
        <taxon>Enterobacteriaceae</taxon>
        <taxon>Salmonella</taxon>
    </lineage>
</organism>
<sequence>MGEISITKLLVVAALVVLLFGTKKLRTLGGDLGTAIKGFKKAMNDEDVGVKKDVDGGVQAEKLSHKE</sequence>
<reference key="1">
    <citation type="submission" date="2007-11" db="EMBL/GenBank/DDBJ databases">
        <authorList>
            <consortium name="The Salmonella enterica serovar Arizonae Genome Sequencing Project"/>
            <person name="McClelland M."/>
            <person name="Sanderson E.K."/>
            <person name="Porwollik S."/>
            <person name="Spieth J."/>
            <person name="Clifton W.S."/>
            <person name="Fulton R."/>
            <person name="Chunyan W."/>
            <person name="Wollam A."/>
            <person name="Shah N."/>
            <person name="Pepin K."/>
            <person name="Bhonagiri V."/>
            <person name="Nash W."/>
            <person name="Johnson M."/>
            <person name="Thiruvilangam P."/>
            <person name="Wilson R."/>
        </authorList>
    </citation>
    <scope>NUCLEOTIDE SEQUENCE [LARGE SCALE GENOMIC DNA]</scope>
    <source>
        <strain>ATCC BAA-731 / CDC346-86 / RSK2980</strain>
    </source>
</reference>
<comment type="function">
    <text evidence="1">Part of the twin-arginine translocation (Tat) system that transports large folded proteins containing a characteristic twin-arginine motif in their signal peptide across membranes. TatE shares overlapping functions with TatA.</text>
</comment>
<comment type="subcellular location">
    <subcellularLocation>
        <location evidence="1">Cell inner membrane</location>
        <topology evidence="1">Single-pass membrane protein</topology>
    </subcellularLocation>
</comment>
<comment type="similarity">
    <text evidence="1">Belongs to the TatA/E family. TatE subfamily.</text>
</comment>
<gene>
    <name evidence="1" type="primary">tatE</name>
    <name type="ordered locus">SARI_02301</name>
</gene>
<feature type="chain" id="PRO_0000412972" description="Probable Sec-independent protein translocase protein TatE">
    <location>
        <begin position="1"/>
        <end position="67"/>
    </location>
</feature>
<feature type="transmembrane region" description="Helical" evidence="1">
    <location>
        <begin position="4"/>
        <end position="21"/>
    </location>
</feature>
<dbReference type="EMBL" id="CP000880">
    <property type="protein sequence ID" value="ABX22164.1"/>
    <property type="molecule type" value="Genomic_DNA"/>
</dbReference>
<dbReference type="SMR" id="A9MKE5"/>
<dbReference type="STRING" id="41514.SARI_02301"/>
<dbReference type="KEGG" id="ses:SARI_02301"/>
<dbReference type="HOGENOM" id="CLU_086034_5_3_6"/>
<dbReference type="Proteomes" id="UP000002084">
    <property type="component" value="Chromosome"/>
</dbReference>
<dbReference type="GO" id="GO:0033281">
    <property type="term" value="C:TAT protein transport complex"/>
    <property type="evidence" value="ECO:0007669"/>
    <property type="project" value="UniProtKB-UniRule"/>
</dbReference>
<dbReference type="GO" id="GO:0008320">
    <property type="term" value="F:protein transmembrane transporter activity"/>
    <property type="evidence" value="ECO:0007669"/>
    <property type="project" value="UniProtKB-UniRule"/>
</dbReference>
<dbReference type="GO" id="GO:0043953">
    <property type="term" value="P:protein transport by the Tat complex"/>
    <property type="evidence" value="ECO:0007669"/>
    <property type="project" value="UniProtKB-UniRule"/>
</dbReference>
<dbReference type="FunFam" id="1.20.5.3310:FF:000001">
    <property type="entry name" value="Probable Sec-independent protein translocase protein TatE"/>
    <property type="match status" value="1"/>
</dbReference>
<dbReference type="Gene3D" id="1.20.5.3310">
    <property type="match status" value="1"/>
</dbReference>
<dbReference type="HAMAP" id="MF_00236">
    <property type="entry name" value="TatA_E"/>
    <property type="match status" value="1"/>
</dbReference>
<dbReference type="HAMAP" id="MF_00903">
    <property type="entry name" value="TatE"/>
    <property type="match status" value="1"/>
</dbReference>
<dbReference type="InterPro" id="IPR003369">
    <property type="entry name" value="TatA/B/E"/>
</dbReference>
<dbReference type="InterPro" id="IPR006312">
    <property type="entry name" value="TatA/E"/>
</dbReference>
<dbReference type="InterPro" id="IPR024905">
    <property type="entry name" value="TatE"/>
</dbReference>
<dbReference type="NCBIfam" id="NF002448">
    <property type="entry name" value="PRK01614.1"/>
    <property type="match status" value="1"/>
</dbReference>
<dbReference type="NCBIfam" id="NF002960">
    <property type="entry name" value="PRK03625.1"/>
    <property type="match status" value="1"/>
</dbReference>
<dbReference type="NCBIfam" id="TIGR01411">
    <property type="entry name" value="tatAE"/>
    <property type="match status" value="1"/>
</dbReference>
<dbReference type="PANTHER" id="PTHR42982">
    <property type="entry name" value="SEC-INDEPENDENT PROTEIN TRANSLOCASE PROTEIN TATA"/>
    <property type="match status" value="1"/>
</dbReference>
<dbReference type="PANTHER" id="PTHR42982:SF5">
    <property type="entry name" value="SEC-INDEPENDENT PROTEIN TRANSLOCASE PROTEIN TATE"/>
    <property type="match status" value="1"/>
</dbReference>
<dbReference type="Pfam" id="PF02416">
    <property type="entry name" value="TatA_B_E"/>
    <property type="match status" value="1"/>
</dbReference>
<proteinExistence type="inferred from homology"/>
<name>TATE_SALAR</name>